<accession>B8H2S1</accession>
<comment type="catalytic activity">
    <reaction evidence="1">
        <text>L-histidine = trans-urocanate + NH4(+)</text>
        <dbReference type="Rhea" id="RHEA:21232"/>
        <dbReference type="ChEBI" id="CHEBI:17771"/>
        <dbReference type="ChEBI" id="CHEBI:28938"/>
        <dbReference type="ChEBI" id="CHEBI:57595"/>
        <dbReference type="EC" id="4.3.1.3"/>
    </reaction>
</comment>
<comment type="pathway">
    <text evidence="1">Amino-acid degradation; L-histidine degradation into L-glutamate; N-formimidoyl-L-glutamate from L-histidine: step 1/3.</text>
</comment>
<comment type="subcellular location">
    <subcellularLocation>
        <location evidence="1">Cytoplasm</location>
    </subcellularLocation>
</comment>
<comment type="PTM">
    <text evidence="1">Contains an active site 4-methylidene-imidazol-5-one (MIO), which is formed autocatalytically by cyclization and dehydration of residues Ala-Ser-Gly.</text>
</comment>
<comment type="similarity">
    <text evidence="1">Belongs to the PAL/histidase family.</text>
</comment>
<reference key="1">
    <citation type="journal article" date="2010" name="J. Bacteriol.">
        <title>The genetic basis of laboratory adaptation in Caulobacter crescentus.</title>
        <authorList>
            <person name="Marks M.E."/>
            <person name="Castro-Rojas C.M."/>
            <person name="Teiling C."/>
            <person name="Du L."/>
            <person name="Kapatral V."/>
            <person name="Walunas T.L."/>
            <person name="Crosson S."/>
        </authorList>
    </citation>
    <scope>NUCLEOTIDE SEQUENCE [LARGE SCALE GENOMIC DNA]</scope>
    <source>
        <strain>NA1000 / CB15N</strain>
    </source>
</reference>
<sequence>MERPVTELVLNPGAVPLAEWKAIYRGASARLAESAWPVIAESAAAVQRILAKGEPVYGINTGFGKLASVRIGDADLETLQRNIVLSHAAGVGEPSPVPVIRLMMALKLASLAQGASGVRVETVRMLEEMLVEGLTPVVPCQGSVGASGDLAPLSHMAATMIGVGEIFVGGQRLPAAQALAQAGLEPLTLGPKEGLALLNGTQFSTANALAGLFEAERLFQSALVTGALSTEAAKGSDTPFDPRIHTLRRHVGQIETAAALRALMSASEIRASHLKEDERVQDPYCLRCQPQVMGAALDILRQAATTLATEANCVSDNPLIFPEADEALSGGNFHAEPVAFAADMIALAVCEIGSIAERRIAMLVDPALSGLPAFLTPKPGLNSGFMIPQVTAAALVSENKQRAYPASVDSIPTSANQEDHVSMAAHGARRLLAMVENADAVLGIELLAAAQGCDFHAPLRSSAALEAVRALTRSKVPHLSDDRHFHPDMEAANTLVRSGAVIAAVGALPGVTA</sequence>
<protein>
    <recommendedName>
        <fullName evidence="1">Histidine ammonia-lyase</fullName>
        <shortName evidence="1">Histidase</shortName>
        <ecNumber evidence="1">4.3.1.3</ecNumber>
    </recommendedName>
</protein>
<proteinExistence type="inferred from homology"/>
<dbReference type="EC" id="4.3.1.3" evidence="1"/>
<dbReference type="EMBL" id="CP001340">
    <property type="protein sequence ID" value="ACL94475.1"/>
    <property type="molecule type" value="Genomic_DNA"/>
</dbReference>
<dbReference type="RefSeq" id="WP_012640105.1">
    <property type="nucleotide sequence ID" value="NC_011916.1"/>
</dbReference>
<dbReference type="RefSeq" id="YP_002516383.1">
    <property type="nucleotide sequence ID" value="NC_011916.1"/>
</dbReference>
<dbReference type="SMR" id="B8H2S1"/>
<dbReference type="GeneID" id="7329758"/>
<dbReference type="KEGG" id="ccs:CCNA_01010"/>
<dbReference type="PATRIC" id="fig|565050.3.peg.992"/>
<dbReference type="HOGENOM" id="CLU_014801_4_0_5"/>
<dbReference type="OrthoDB" id="9806955at2"/>
<dbReference type="PhylomeDB" id="B8H2S1"/>
<dbReference type="UniPathway" id="UPA00379">
    <property type="reaction ID" value="UER00549"/>
</dbReference>
<dbReference type="Proteomes" id="UP000001364">
    <property type="component" value="Chromosome"/>
</dbReference>
<dbReference type="GO" id="GO:0005737">
    <property type="term" value="C:cytoplasm"/>
    <property type="evidence" value="ECO:0007669"/>
    <property type="project" value="UniProtKB-SubCell"/>
</dbReference>
<dbReference type="GO" id="GO:0004397">
    <property type="term" value="F:histidine ammonia-lyase activity"/>
    <property type="evidence" value="ECO:0007669"/>
    <property type="project" value="UniProtKB-UniRule"/>
</dbReference>
<dbReference type="GO" id="GO:0019556">
    <property type="term" value="P:L-histidine catabolic process to glutamate and formamide"/>
    <property type="evidence" value="ECO:0007669"/>
    <property type="project" value="UniProtKB-UniPathway"/>
</dbReference>
<dbReference type="GO" id="GO:0019557">
    <property type="term" value="P:L-histidine catabolic process to glutamate and formate"/>
    <property type="evidence" value="ECO:0007669"/>
    <property type="project" value="UniProtKB-UniPathway"/>
</dbReference>
<dbReference type="CDD" id="cd00332">
    <property type="entry name" value="PAL-HAL"/>
    <property type="match status" value="1"/>
</dbReference>
<dbReference type="FunFam" id="1.10.275.10:FF:000005">
    <property type="entry name" value="Histidine ammonia-lyase"/>
    <property type="match status" value="1"/>
</dbReference>
<dbReference type="FunFam" id="1.20.200.10:FF:000003">
    <property type="entry name" value="Histidine ammonia-lyase"/>
    <property type="match status" value="1"/>
</dbReference>
<dbReference type="Gene3D" id="1.20.200.10">
    <property type="entry name" value="Fumarase/aspartase (Central domain)"/>
    <property type="match status" value="1"/>
</dbReference>
<dbReference type="Gene3D" id="1.10.275.10">
    <property type="entry name" value="Fumarase/aspartase (N-terminal domain)"/>
    <property type="match status" value="1"/>
</dbReference>
<dbReference type="HAMAP" id="MF_00229">
    <property type="entry name" value="His_ammonia_lyase"/>
    <property type="match status" value="1"/>
</dbReference>
<dbReference type="InterPro" id="IPR001106">
    <property type="entry name" value="Aromatic_Lyase"/>
</dbReference>
<dbReference type="InterPro" id="IPR024083">
    <property type="entry name" value="Fumarase/histidase_N"/>
</dbReference>
<dbReference type="InterPro" id="IPR005921">
    <property type="entry name" value="HutH"/>
</dbReference>
<dbReference type="InterPro" id="IPR008948">
    <property type="entry name" value="L-Aspartase-like"/>
</dbReference>
<dbReference type="InterPro" id="IPR022313">
    <property type="entry name" value="Phe/His_NH3-lyase_AS"/>
</dbReference>
<dbReference type="NCBIfam" id="TIGR01225">
    <property type="entry name" value="hutH"/>
    <property type="match status" value="1"/>
</dbReference>
<dbReference type="NCBIfam" id="NF006871">
    <property type="entry name" value="PRK09367.1"/>
    <property type="match status" value="1"/>
</dbReference>
<dbReference type="PANTHER" id="PTHR10362">
    <property type="entry name" value="HISTIDINE AMMONIA-LYASE"/>
    <property type="match status" value="1"/>
</dbReference>
<dbReference type="Pfam" id="PF00221">
    <property type="entry name" value="Lyase_aromatic"/>
    <property type="match status" value="1"/>
</dbReference>
<dbReference type="SUPFAM" id="SSF48557">
    <property type="entry name" value="L-aspartase-like"/>
    <property type="match status" value="1"/>
</dbReference>
<dbReference type="PROSITE" id="PS00488">
    <property type="entry name" value="PAL_HISTIDASE"/>
    <property type="match status" value="1"/>
</dbReference>
<evidence type="ECO:0000255" key="1">
    <source>
        <dbReference type="HAMAP-Rule" id="MF_00229"/>
    </source>
</evidence>
<name>HUTH_CAUVN</name>
<keyword id="KW-0963">Cytoplasm</keyword>
<keyword id="KW-0369">Histidine metabolism</keyword>
<keyword id="KW-0456">Lyase</keyword>
<keyword id="KW-1185">Reference proteome</keyword>
<feature type="chain" id="PRO_1000125092" description="Histidine ammonia-lyase">
    <location>
        <begin position="1"/>
        <end position="513"/>
    </location>
</feature>
<feature type="modified residue" description="2,3-didehydroalanine (Ser)" evidence="1">
    <location>
        <position position="147"/>
    </location>
</feature>
<feature type="cross-link" description="5-imidazolinone (Ala-Gly)" evidence="1">
    <location>
        <begin position="146"/>
        <end position="148"/>
    </location>
</feature>
<organism>
    <name type="scientific">Caulobacter vibrioides (strain NA1000 / CB15N)</name>
    <name type="common">Caulobacter crescentus</name>
    <dbReference type="NCBI Taxonomy" id="565050"/>
    <lineage>
        <taxon>Bacteria</taxon>
        <taxon>Pseudomonadati</taxon>
        <taxon>Pseudomonadota</taxon>
        <taxon>Alphaproteobacteria</taxon>
        <taxon>Caulobacterales</taxon>
        <taxon>Caulobacteraceae</taxon>
        <taxon>Caulobacter</taxon>
    </lineage>
</organism>
<gene>
    <name evidence="1" type="primary">hutH</name>
    <name type="ordered locus">CCNA_01010</name>
</gene>